<feature type="chain" id="PRO_0000327135" description="Protoheme IX farnesyltransferase">
    <location>
        <begin position="1"/>
        <end position="310"/>
    </location>
</feature>
<feature type="transmembrane region" description="Helical" evidence="1">
    <location>
        <begin position="26"/>
        <end position="46"/>
    </location>
</feature>
<feature type="transmembrane region" description="Helical" evidence="1">
    <location>
        <begin position="47"/>
        <end position="67"/>
    </location>
</feature>
<feature type="transmembrane region" description="Helical" evidence="1">
    <location>
        <begin position="95"/>
        <end position="115"/>
    </location>
</feature>
<feature type="transmembrane region" description="Helical" evidence="1">
    <location>
        <begin position="118"/>
        <end position="138"/>
    </location>
</feature>
<feature type="transmembrane region" description="Helical" evidence="1">
    <location>
        <begin position="147"/>
        <end position="167"/>
    </location>
</feature>
<feature type="transmembrane region" description="Helical" evidence="1">
    <location>
        <begin position="174"/>
        <end position="194"/>
    </location>
</feature>
<feature type="transmembrane region" description="Helical" evidence="1">
    <location>
        <begin position="220"/>
        <end position="240"/>
    </location>
</feature>
<feature type="transmembrane region" description="Helical" evidence="1">
    <location>
        <begin position="243"/>
        <end position="263"/>
    </location>
</feature>
<feature type="transmembrane region" description="Helical" evidence="1">
    <location>
        <begin position="281"/>
        <end position="301"/>
    </location>
</feature>
<protein>
    <recommendedName>
        <fullName evidence="1">Protoheme IX farnesyltransferase</fullName>
        <ecNumber evidence="1">2.5.1.141</ecNumber>
    </recommendedName>
    <alternativeName>
        <fullName evidence="1">Heme B farnesyltransferase</fullName>
    </alternativeName>
    <alternativeName>
        <fullName evidence="1">Heme O synthase</fullName>
    </alternativeName>
</protein>
<evidence type="ECO:0000255" key="1">
    <source>
        <dbReference type="HAMAP-Rule" id="MF_00154"/>
    </source>
</evidence>
<sequence length="310" mass="33500">MTDIRITEVPREAGFGDYFALLKPRVMSLVVFTALVGLLVAPATVHPMIALTGILFIALGAGASGALNMWWDADIDRVMKRTRNRPVPAGVVQPGEALGLGLALSGIAVVMLGLATNLFAAGLLAFTIFFYAVVYSMWLKRTTPQNIVIGGAAGAFPPMIGWAVATGGVSLESLFMFALIFMWTPPHFWSLALFMKTDYSDAGVPMLTVTHGRRVTRGHVLAYALLLAPLAVAGAFTGIGGPLYLVVALALNGWLLRGAVRIWRRDEAEAEADRYRTEKGFFRFSLYYLFLHFGAILAEAALKPYGLGGW</sequence>
<name>COXX_CERS5</name>
<reference key="1">
    <citation type="submission" date="2007-04" db="EMBL/GenBank/DDBJ databases">
        <title>Complete sequence of chromosome of Rhodobacter sphaeroides ATCC 17025.</title>
        <authorList>
            <consortium name="US DOE Joint Genome Institute"/>
            <person name="Copeland A."/>
            <person name="Lucas S."/>
            <person name="Lapidus A."/>
            <person name="Barry K."/>
            <person name="Detter J.C."/>
            <person name="Glavina del Rio T."/>
            <person name="Hammon N."/>
            <person name="Israni S."/>
            <person name="Dalin E."/>
            <person name="Tice H."/>
            <person name="Pitluck S."/>
            <person name="Chertkov O."/>
            <person name="Brettin T."/>
            <person name="Bruce D."/>
            <person name="Han C."/>
            <person name="Schmutz J."/>
            <person name="Larimer F."/>
            <person name="Land M."/>
            <person name="Hauser L."/>
            <person name="Kyrpides N."/>
            <person name="Kim E."/>
            <person name="Richardson P."/>
            <person name="Mackenzie C."/>
            <person name="Choudhary M."/>
            <person name="Donohue T.J."/>
            <person name="Kaplan S."/>
        </authorList>
    </citation>
    <scope>NUCLEOTIDE SEQUENCE [LARGE SCALE GENOMIC DNA]</scope>
    <source>
        <strain>ATCC 17025 / ATH 2.4.3</strain>
    </source>
</reference>
<proteinExistence type="inferred from homology"/>
<comment type="function">
    <text evidence="1">Converts heme B (protoheme IX) to heme O by substitution of the vinyl group on carbon 2 of heme B porphyrin ring with a hydroxyethyl farnesyl side group.</text>
</comment>
<comment type="catalytic activity">
    <reaction evidence="1">
        <text>heme b + (2E,6E)-farnesyl diphosphate + H2O = Fe(II)-heme o + diphosphate</text>
        <dbReference type="Rhea" id="RHEA:28070"/>
        <dbReference type="ChEBI" id="CHEBI:15377"/>
        <dbReference type="ChEBI" id="CHEBI:33019"/>
        <dbReference type="ChEBI" id="CHEBI:60344"/>
        <dbReference type="ChEBI" id="CHEBI:60530"/>
        <dbReference type="ChEBI" id="CHEBI:175763"/>
        <dbReference type="EC" id="2.5.1.141"/>
    </reaction>
</comment>
<comment type="pathway">
    <text evidence="1">Porphyrin-containing compound metabolism; heme O biosynthesis; heme O from protoheme: step 1/1.</text>
</comment>
<comment type="subunit">
    <text evidence="1">Interacts with CtaA.</text>
</comment>
<comment type="subcellular location">
    <subcellularLocation>
        <location evidence="1">Cell inner membrane</location>
        <topology evidence="1">Multi-pass membrane protein</topology>
    </subcellularLocation>
</comment>
<comment type="miscellaneous">
    <text evidence="1">Carbon 2 of the heme B porphyrin ring is defined according to the Fischer nomenclature.</text>
</comment>
<comment type="similarity">
    <text evidence="1">Belongs to the UbiA prenyltransferase family. Protoheme IX farnesyltransferase subfamily.</text>
</comment>
<dbReference type="EC" id="2.5.1.141" evidence="1"/>
<dbReference type="EMBL" id="CP000661">
    <property type="protein sequence ID" value="ABP69521.1"/>
    <property type="molecule type" value="Genomic_DNA"/>
</dbReference>
<dbReference type="SMR" id="A4WQ57"/>
<dbReference type="STRING" id="349102.Rsph17025_0615"/>
<dbReference type="KEGG" id="rsq:Rsph17025_0615"/>
<dbReference type="eggNOG" id="COG0109">
    <property type="taxonomic scope" value="Bacteria"/>
</dbReference>
<dbReference type="HOGENOM" id="CLU_029631_0_2_5"/>
<dbReference type="BioCyc" id="RSPH349102:G1G8M-636-MONOMER"/>
<dbReference type="UniPathway" id="UPA00834">
    <property type="reaction ID" value="UER00712"/>
</dbReference>
<dbReference type="GO" id="GO:0005886">
    <property type="term" value="C:plasma membrane"/>
    <property type="evidence" value="ECO:0007669"/>
    <property type="project" value="UniProtKB-SubCell"/>
</dbReference>
<dbReference type="GO" id="GO:0008495">
    <property type="term" value="F:protoheme IX farnesyltransferase activity"/>
    <property type="evidence" value="ECO:0007669"/>
    <property type="project" value="UniProtKB-UniRule"/>
</dbReference>
<dbReference type="GO" id="GO:0048034">
    <property type="term" value="P:heme O biosynthetic process"/>
    <property type="evidence" value="ECO:0007669"/>
    <property type="project" value="UniProtKB-UniRule"/>
</dbReference>
<dbReference type="CDD" id="cd13957">
    <property type="entry name" value="PT_UbiA_Cox10"/>
    <property type="match status" value="1"/>
</dbReference>
<dbReference type="Gene3D" id="1.10.357.140">
    <property type="entry name" value="UbiA prenyltransferase"/>
    <property type="match status" value="1"/>
</dbReference>
<dbReference type="HAMAP" id="MF_00154">
    <property type="entry name" value="CyoE_CtaB"/>
    <property type="match status" value="1"/>
</dbReference>
<dbReference type="InterPro" id="IPR006369">
    <property type="entry name" value="Protohaem_IX_farnesylTrfase"/>
</dbReference>
<dbReference type="InterPro" id="IPR000537">
    <property type="entry name" value="UbiA_prenyltransferase"/>
</dbReference>
<dbReference type="InterPro" id="IPR030470">
    <property type="entry name" value="UbiA_prenylTrfase_CS"/>
</dbReference>
<dbReference type="InterPro" id="IPR044878">
    <property type="entry name" value="UbiA_sf"/>
</dbReference>
<dbReference type="NCBIfam" id="TIGR01473">
    <property type="entry name" value="cyoE_ctaB"/>
    <property type="match status" value="1"/>
</dbReference>
<dbReference type="NCBIfam" id="NF003349">
    <property type="entry name" value="PRK04375.1-2"/>
    <property type="match status" value="1"/>
</dbReference>
<dbReference type="PANTHER" id="PTHR43448:SF7">
    <property type="entry name" value="4-HYDROXYBENZOATE SOLANESYLTRANSFERASE"/>
    <property type="match status" value="1"/>
</dbReference>
<dbReference type="PANTHER" id="PTHR43448">
    <property type="entry name" value="PROTOHEME IX FARNESYLTRANSFERASE, MITOCHONDRIAL"/>
    <property type="match status" value="1"/>
</dbReference>
<dbReference type="Pfam" id="PF01040">
    <property type="entry name" value="UbiA"/>
    <property type="match status" value="1"/>
</dbReference>
<dbReference type="PROSITE" id="PS00943">
    <property type="entry name" value="UBIA"/>
    <property type="match status" value="1"/>
</dbReference>
<organism>
    <name type="scientific">Cereibacter sphaeroides (strain ATCC 17025 / ATH 2.4.3)</name>
    <name type="common">Rhodobacter sphaeroides</name>
    <dbReference type="NCBI Taxonomy" id="349102"/>
    <lineage>
        <taxon>Bacteria</taxon>
        <taxon>Pseudomonadati</taxon>
        <taxon>Pseudomonadota</taxon>
        <taxon>Alphaproteobacteria</taxon>
        <taxon>Rhodobacterales</taxon>
        <taxon>Paracoccaceae</taxon>
        <taxon>Cereibacter</taxon>
    </lineage>
</organism>
<accession>A4WQ57</accession>
<gene>
    <name evidence="1" type="primary">ctaB</name>
    <name type="ordered locus">Rsph17025_0615</name>
</gene>
<keyword id="KW-0997">Cell inner membrane</keyword>
<keyword id="KW-1003">Cell membrane</keyword>
<keyword id="KW-0350">Heme biosynthesis</keyword>
<keyword id="KW-0472">Membrane</keyword>
<keyword id="KW-0808">Transferase</keyword>
<keyword id="KW-0812">Transmembrane</keyword>
<keyword id="KW-1133">Transmembrane helix</keyword>